<gene>
    <name evidence="1" type="primary">rpmH</name>
    <name type="ordered locus">CLK_3132</name>
</gene>
<reference key="1">
    <citation type="journal article" date="2007" name="PLoS ONE">
        <title>Analysis of the neurotoxin complex genes in Clostridium botulinum A1-A4 and B1 strains: BoNT/A3, /Ba4 and /B1 clusters are located within plasmids.</title>
        <authorList>
            <person name="Smith T.J."/>
            <person name="Hill K.K."/>
            <person name="Foley B.T."/>
            <person name="Detter J.C."/>
            <person name="Munk A.C."/>
            <person name="Bruce D.C."/>
            <person name="Doggett N.A."/>
            <person name="Smith L.A."/>
            <person name="Marks J.D."/>
            <person name="Xie G."/>
            <person name="Brettin T.S."/>
        </authorList>
    </citation>
    <scope>NUCLEOTIDE SEQUENCE [LARGE SCALE GENOMIC DNA]</scope>
    <source>
        <strain>Loch Maree / Type A3</strain>
    </source>
</reference>
<sequence>MFMTYQPKKRQRKKEHGFRKRMKTSSGRNILRKRRQKGRKRLTA</sequence>
<name>RL34_CLOBM</name>
<accession>B1KUB7</accession>
<dbReference type="EMBL" id="CP000962">
    <property type="protein sequence ID" value="ACA55245.1"/>
    <property type="molecule type" value="Genomic_DNA"/>
</dbReference>
<dbReference type="RefSeq" id="WP_003359452.1">
    <property type="nucleotide sequence ID" value="NC_010520.1"/>
</dbReference>
<dbReference type="SMR" id="B1KUB7"/>
<dbReference type="GeneID" id="92940449"/>
<dbReference type="KEGG" id="cbl:CLK_3132"/>
<dbReference type="HOGENOM" id="CLU_129938_2_0_9"/>
<dbReference type="GO" id="GO:1990904">
    <property type="term" value="C:ribonucleoprotein complex"/>
    <property type="evidence" value="ECO:0007669"/>
    <property type="project" value="UniProtKB-KW"/>
</dbReference>
<dbReference type="GO" id="GO:0005840">
    <property type="term" value="C:ribosome"/>
    <property type="evidence" value="ECO:0007669"/>
    <property type="project" value="UniProtKB-KW"/>
</dbReference>
<dbReference type="GO" id="GO:0003735">
    <property type="term" value="F:structural constituent of ribosome"/>
    <property type="evidence" value="ECO:0007669"/>
    <property type="project" value="InterPro"/>
</dbReference>
<dbReference type="GO" id="GO:0006412">
    <property type="term" value="P:translation"/>
    <property type="evidence" value="ECO:0007669"/>
    <property type="project" value="UniProtKB-UniRule"/>
</dbReference>
<dbReference type="FunFam" id="1.10.287.3980:FF:000001">
    <property type="entry name" value="Mitochondrial ribosomal protein L34"/>
    <property type="match status" value="1"/>
</dbReference>
<dbReference type="Gene3D" id="1.10.287.3980">
    <property type="match status" value="1"/>
</dbReference>
<dbReference type="HAMAP" id="MF_00391">
    <property type="entry name" value="Ribosomal_bL34"/>
    <property type="match status" value="1"/>
</dbReference>
<dbReference type="InterPro" id="IPR000271">
    <property type="entry name" value="Ribosomal_bL34"/>
</dbReference>
<dbReference type="InterPro" id="IPR020939">
    <property type="entry name" value="Ribosomal_bL34_CS"/>
</dbReference>
<dbReference type="NCBIfam" id="TIGR01030">
    <property type="entry name" value="rpmH_bact"/>
    <property type="match status" value="1"/>
</dbReference>
<dbReference type="PANTHER" id="PTHR14503:SF4">
    <property type="entry name" value="LARGE RIBOSOMAL SUBUNIT PROTEIN BL34M"/>
    <property type="match status" value="1"/>
</dbReference>
<dbReference type="PANTHER" id="PTHR14503">
    <property type="entry name" value="MITOCHONDRIAL RIBOSOMAL PROTEIN 34 FAMILY MEMBER"/>
    <property type="match status" value="1"/>
</dbReference>
<dbReference type="Pfam" id="PF00468">
    <property type="entry name" value="Ribosomal_L34"/>
    <property type="match status" value="1"/>
</dbReference>
<dbReference type="PROSITE" id="PS00784">
    <property type="entry name" value="RIBOSOMAL_L34"/>
    <property type="match status" value="1"/>
</dbReference>
<comment type="similarity">
    <text evidence="1">Belongs to the bacterial ribosomal protein bL34 family.</text>
</comment>
<proteinExistence type="inferred from homology"/>
<feature type="chain" id="PRO_1000196026" description="Large ribosomal subunit protein bL34">
    <location>
        <begin position="1"/>
        <end position="44"/>
    </location>
</feature>
<feature type="region of interest" description="Disordered" evidence="2">
    <location>
        <begin position="1"/>
        <end position="44"/>
    </location>
</feature>
<feature type="compositionally biased region" description="Basic residues" evidence="2">
    <location>
        <begin position="7"/>
        <end position="23"/>
    </location>
</feature>
<feature type="compositionally biased region" description="Basic residues" evidence="2">
    <location>
        <begin position="30"/>
        <end position="44"/>
    </location>
</feature>
<evidence type="ECO:0000255" key="1">
    <source>
        <dbReference type="HAMAP-Rule" id="MF_00391"/>
    </source>
</evidence>
<evidence type="ECO:0000256" key="2">
    <source>
        <dbReference type="SAM" id="MobiDB-lite"/>
    </source>
</evidence>
<evidence type="ECO:0000305" key="3"/>
<organism>
    <name type="scientific">Clostridium botulinum (strain Loch Maree / Type A3)</name>
    <dbReference type="NCBI Taxonomy" id="498214"/>
    <lineage>
        <taxon>Bacteria</taxon>
        <taxon>Bacillati</taxon>
        <taxon>Bacillota</taxon>
        <taxon>Clostridia</taxon>
        <taxon>Eubacteriales</taxon>
        <taxon>Clostridiaceae</taxon>
        <taxon>Clostridium</taxon>
    </lineage>
</organism>
<keyword id="KW-0687">Ribonucleoprotein</keyword>
<keyword id="KW-0689">Ribosomal protein</keyword>
<protein>
    <recommendedName>
        <fullName evidence="1">Large ribosomal subunit protein bL34</fullName>
    </recommendedName>
    <alternativeName>
        <fullName evidence="3">50S ribosomal protein L34</fullName>
    </alternativeName>
</protein>